<proteinExistence type="inferred from homology"/>
<gene>
    <name type="primary">rpmB2</name>
    <name type="ordered locus">MT2118</name>
</gene>
<name>RL28B_MYCTO</name>
<sequence length="78" mass="9095">MSAHCQVTGRKPGFGNTVSHSHRRSRRRWSPNIQQRTYYLPSEGRRIRLRVSTKGIKVIDRDGIEAVVARLRRQGQRI</sequence>
<protein>
    <recommendedName>
        <fullName evidence="1">Large ribosomal subunit protein bL28B</fullName>
    </recommendedName>
    <alternativeName>
        <fullName evidence="3">50S ribosomal protein L28 2</fullName>
    </alternativeName>
</protein>
<comment type="similarity">
    <text evidence="1">Belongs to the bacterial ribosomal protein bL28 family.</text>
</comment>
<organism>
    <name type="scientific">Mycobacterium tuberculosis (strain CDC 1551 / Oshkosh)</name>
    <dbReference type="NCBI Taxonomy" id="83331"/>
    <lineage>
        <taxon>Bacteria</taxon>
        <taxon>Bacillati</taxon>
        <taxon>Actinomycetota</taxon>
        <taxon>Actinomycetes</taxon>
        <taxon>Mycobacteriales</taxon>
        <taxon>Mycobacteriaceae</taxon>
        <taxon>Mycobacterium</taxon>
        <taxon>Mycobacterium tuberculosis complex</taxon>
    </lineage>
</organism>
<accession>P9WHA8</accession>
<accession>L0TA19</accession>
<accession>O86357</accession>
<accession>P66148</accession>
<evidence type="ECO:0000255" key="1">
    <source>
        <dbReference type="HAMAP-Rule" id="MF_00373"/>
    </source>
</evidence>
<evidence type="ECO:0000256" key="2">
    <source>
        <dbReference type="SAM" id="MobiDB-lite"/>
    </source>
</evidence>
<evidence type="ECO:0000305" key="3"/>
<keyword id="KW-1185">Reference proteome</keyword>
<keyword id="KW-0687">Ribonucleoprotein</keyword>
<keyword id="KW-0689">Ribosomal protein</keyword>
<dbReference type="EMBL" id="AE000516">
    <property type="protein sequence ID" value="AAK46398.1"/>
    <property type="molecule type" value="Genomic_DNA"/>
</dbReference>
<dbReference type="PIR" id="A70946">
    <property type="entry name" value="A70946"/>
</dbReference>
<dbReference type="SMR" id="P9WHA8"/>
<dbReference type="KEGG" id="mtc:MT2118"/>
<dbReference type="PATRIC" id="fig|83331.31.peg.2285"/>
<dbReference type="HOGENOM" id="CLU_064548_3_1_11"/>
<dbReference type="Proteomes" id="UP000001020">
    <property type="component" value="Chromosome"/>
</dbReference>
<dbReference type="GO" id="GO:1990904">
    <property type="term" value="C:ribonucleoprotein complex"/>
    <property type="evidence" value="ECO:0007669"/>
    <property type="project" value="UniProtKB-KW"/>
</dbReference>
<dbReference type="GO" id="GO:0005840">
    <property type="term" value="C:ribosome"/>
    <property type="evidence" value="ECO:0007669"/>
    <property type="project" value="UniProtKB-KW"/>
</dbReference>
<dbReference type="GO" id="GO:0003735">
    <property type="term" value="F:structural constituent of ribosome"/>
    <property type="evidence" value="ECO:0007669"/>
    <property type="project" value="InterPro"/>
</dbReference>
<dbReference type="GO" id="GO:0006412">
    <property type="term" value="P:translation"/>
    <property type="evidence" value="ECO:0007669"/>
    <property type="project" value="UniProtKB-UniRule"/>
</dbReference>
<dbReference type="FunFam" id="2.30.170.40:FF:000001">
    <property type="entry name" value="50S ribosomal protein L28"/>
    <property type="match status" value="1"/>
</dbReference>
<dbReference type="Gene3D" id="2.30.170.40">
    <property type="entry name" value="Ribosomal protein L28/L24"/>
    <property type="match status" value="1"/>
</dbReference>
<dbReference type="HAMAP" id="MF_00373">
    <property type="entry name" value="Ribosomal_bL28"/>
    <property type="match status" value="1"/>
</dbReference>
<dbReference type="InterPro" id="IPR026569">
    <property type="entry name" value="Ribosomal_bL28"/>
</dbReference>
<dbReference type="InterPro" id="IPR034704">
    <property type="entry name" value="Ribosomal_bL28/bL31-like_sf"/>
</dbReference>
<dbReference type="InterPro" id="IPR001383">
    <property type="entry name" value="Ribosomal_bL28_bact-type"/>
</dbReference>
<dbReference type="InterPro" id="IPR037147">
    <property type="entry name" value="Ribosomal_bL28_sf"/>
</dbReference>
<dbReference type="NCBIfam" id="TIGR00009">
    <property type="entry name" value="L28"/>
    <property type="match status" value="1"/>
</dbReference>
<dbReference type="PANTHER" id="PTHR13528">
    <property type="entry name" value="39S RIBOSOMAL PROTEIN L28, MITOCHONDRIAL"/>
    <property type="match status" value="1"/>
</dbReference>
<dbReference type="PANTHER" id="PTHR13528:SF2">
    <property type="entry name" value="LARGE RIBOSOMAL SUBUNIT PROTEIN BL28M"/>
    <property type="match status" value="1"/>
</dbReference>
<dbReference type="Pfam" id="PF00830">
    <property type="entry name" value="Ribosomal_L28"/>
    <property type="match status" value="1"/>
</dbReference>
<dbReference type="SUPFAM" id="SSF143800">
    <property type="entry name" value="L28p-like"/>
    <property type="match status" value="1"/>
</dbReference>
<reference key="1">
    <citation type="journal article" date="2002" name="J. Bacteriol.">
        <title>Whole-genome comparison of Mycobacterium tuberculosis clinical and laboratory strains.</title>
        <authorList>
            <person name="Fleischmann R.D."/>
            <person name="Alland D."/>
            <person name="Eisen J.A."/>
            <person name="Carpenter L."/>
            <person name="White O."/>
            <person name="Peterson J.D."/>
            <person name="DeBoy R.T."/>
            <person name="Dodson R.J."/>
            <person name="Gwinn M.L."/>
            <person name="Haft D.H."/>
            <person name="Hickey E.K."/>
            <person name="Kolonay J.F."/>
            <person name="Nelson W.C."/>
            <person name="Umayam L.A."/>
            <person name="Ermolaeva M.D."/>
            <person name="Salzberg S.L."/>
            <person name="Delcher A."/>
            <person name="Utterback T.R."/>
            <person name="Weidman J.F."/>
            <person name="Khouri H.M."/>
            <person name="Gill J."/>
            <person name="Mikula A."/>
            <person name="Bishai W."/>
            <person name="Jacobs W.R. Jr."/>
            <person name="Venter J.C."/>
            <person name="Fraser C.M."/>
        </authorList>
    </citation>
    <scope>NUCLEOTIDE SEQUENCE [LARGE SCALE GENOMIC DNA]</scope>
    <source>
        <strain>CDC 1551 / Oshkosh</strain>
    </source>
</reference>
<feature type="chain" id="PRO_0000428219" description="Large ribosomal subunit protein bL28B">
    <location>
        <begin position="1"/>
        <end position="78"/>
    </location>
</feature>
<feature type="region of interest" description="Disordered" evidence="2">
    <location>
        <begin position="1"/>
        <end position="29"/>
    </location>
</feature>
<feature type="compositionally biased region" description="Basic residues" evidence="2">
    <location>
        <begin position="20"/>
        <end position="29"/>
    </location>
</feature>